<sequence length="600" mass="68681">MVNNMTDLTAQEPAWQTRDHLDDPVIGELRNRFGPDAFTVQATRTGVPVVWIKREQLLEVGDFLKKLPKPYVMLFDLHGMDERLRTHREGLPAADFSVFYHLISIDRNRDIMLKVALAENDLHVPTFTKLFPNANWYERETWDLFGITFDGHPNLRRIMMPQTWKGHPLRKDYPARATEFSPFELTKAKQDLEMEALTFKPEEWGMKRGTENEDFMFLNLGPNHPSAHGAFRIVLQLDGEEIVDCVPDIGYHHRGAEKMGERQSWHSYIPYTDRIEYLGGCVNEMPYVLAVEKLAGITVPARVNVIRVMLSELFRINSHLLYISTFIQDVGAMTPVFFAFTDRQKIYDLVEAITGFRMHPAWFRIGGVAHDLPRGWDRLLREFLDWMPKRLASYEKAALQNTILKGRSQGVAAYGAKEALEWGTTGAGLRATGIDFDVRKARPYSGYENFDFEIPVGGGVSDCYTRVMLKVEELRQSLRILEQCLNNMPEGPFKADHPLTTPPPKERTLQHIETLITHFLQVSWGPVMPANESFQMIEATKGINSYYLTSDGSTMSYRTRIRTPSYAHLQQIPAAIRGSLVSDLIVYLGSIDFVMSDVDR</sequence>
<dbReference type="EC" id="7.1.1.-" evidence="1"/>
<dbReference type="EMBL" id="CP001164">
    <property type="protein sequence ID" value="ACI37606.1"/>
    <property type="molecule type" value="Genomic_DNA"/>
</dbReference>
<dbReference type="SMR" id="B5YXS6"/>
<dbReference type="KEGG" id="ecf:ECH74115_3425"/>
<dbReference type="HOGENOM" id="CLU_015134_3_2_6"/>
<dbReference type="GO" id="GO:0030964">
    <property type="term" value="C:NADH dehydrogenase complex"/>
    <property type="evidence" value="ECO:0007669"/>
    <property type="project" value="InterPro"/>
</dbReference>
<dbReference type="GO" id="GO:0005886">
    <property type="term" value="C:plasma membrane"/>
    <property type="evidence" value="ECO:0007669"/>
    <property type="project" value="UniProtKB-SubCell"/>
</dbReference>
<dbReference type="GO" id="GO:0051287">
    <property type="term" value="F:NAD binding"/>
    <property type="evidence" value="ECO:0007669"/>
    <property type="project" value="InterPro"/>
</dbReference>
<dbReference type="GO" id="GO:0008137">
    <property type="term" value="F:NADH dehydrogenase (ubiquinone) activity"/>
    <property type="evidence" value="ECO:0007669"/>
    <property type="project" value="InterPro"/>
</dbReference>
<dbReference type="GO" id="GO:0050136">
    <property type="term" value="F:NADH:ubiquinone reductase (non-electrogenic) activity"/>
    <property type="evidence" value="ECO:0007669"/>
    <property type="project" value="UniProtKB-UniRule"/>
</dbReference>
<dbReference type="GO" id="GO:0048038">
    <property type="term" value="F:quinone binding"/>
    <property type="evidence" value="ECO:0007669"/>
    <property type="project" value="UniProtKB-KW"/>
</dbReference>
<dbReference type="FunFam" id="1.10.645.10:FF:000001">
    <property type="entry name" value="NADH-quinone oxidoreductase subunit C/D"/>
    <property type="match status" value="1"/>
</dbReference>
<dbReference type="FunFam" id="3.30.460.80:FF:000001">
    <property type="entry name" value="NADH-quinone oxidoreductase subunit C/D"/>
    <property type="match status" value="1"/>
</dbReference>
<dbReference type="Gene3D" id="1.10.645.10">
    <property type="entry name" value="Cytochrome-c3 Hydrogenase, chain B"/>
    <property type="match status" value="1"/>
</dbReference>
<dbReference type="Gene3D" id="3.30.460.80">
    <property type="entry name" value="NADH:ubiquinone oxidoreductase, 30kDa subunit"/>
    <property type="match status" value="1"/>
</dbReference>
<dbReference type="HAMAP" id="MF_01357">
    <property type="entry name" value="NDH1_NuoC"/>
    <property type="match status" value="1"/>
</dbReference>
<dbReference type="HAMAP" id="MF_01359">
    <property type="entry name" value="NDH1_NuoCD_1"/>
    <property type="match status" value="1"/>
</dbReference>
<dbReference type="HAMAP" id="MF_01358">
    <property type="entry name" value="NDH1_NuoD"/>
    <property type="match status" value="1"/>
</dbReference>
<dbReference type="InterPro" id="IPR010218">
    <property type="entry name" value="NADH_DH_suC"/>
</dbReference>
<dbReference type="InterPro" id="IPR023062">
    <property type="entry name" value="NADH_DH_suCD"/>
</dbReference>
<dbReference type="InterPro" id="IPR001135">
    <property type="entry name" value="NADH_Q_OxRdtase_suD"/>
</dbReference>
<dbReference type="InterPro" id="IPR037232">
    <property type="entry name" value="NADH_quin_OxRdtase_su_C/D-like"/>
</dbReference>
<dbReference type="InterPro" id="IPR001268">
    <property type="entry name" value="NADH_UbQ_OxRdtase_30kDa_su"/>
</dbReference>
<dbReference type="InterPro" id="IPR014029">
    <property type="entry name" value="NADH_UbQ_OxRdtase_49kDa_CS"/>
</dbReference>
<dbReference type="InterPro" id="IPR020396">
    <property type="entry name" value="NADH_UbQ_OxRdtase_CS"/>
</dbReference>
<dbReference type="InterPro" id="IPR022885">
    <property type="entry name" value="NDH1_su_D/H"/>
</dbReference>
<dbReference type="InterPro" id="IPR029014">
    <property type="entry name" value="NiFe-Hase_large"/>
</dbReference>
<dbReference type="NCBIfam" id="TIGR01961">
    <property type="entry name" value="NuoC_fam"/>
    <property type="match status" value="1"/>
</dbReference>
<dbReference type="NCBIfam" id="TIGR01962">
    <property type="entry name" value="NuoD"/>
    <property type="match status" value="1"/>
</dbReference>
<dbReference type="NCBIfam" id="NF004739">
    <property type="entry name" value="PRK06075.1"/>
    <property type="match status" value="1"/>
</dbReference>
<dbReference type="NCBIfam" id="NF008728">
    <property type="entry name" value="PRK11742.1"/>
    <property type="match status" value="1"/>
</dbReference>
<dbReference type="PANTHER" id="PTHR11993:SF45">
    <property type="entry name" value="NADH-QUINONE OXIDOREDUCTASE SUBUNIT C_D"/>
    <property type="match status" value="1"/>
</dbReference>
<dbReference type="PANTHER" id="PTHR11993">
    <property type="entry name" value="NADH-UBIQUINONE OXIDOREDUCTASE 49 KDA SUBUNIT"/>
    <property type="match status" value="1"/>
</dbReference>
<dbReference type="Pfam" id="PF00329">
    <property type="entry name" value="Complex1_30kDa"/>
    <property type="match status" value="1"/>
</dbReference>
<dbReference type="Pfam" id="PF00346">
    <property type="entry name" value="Complex1_49kDa"/>
    <property type="match status" value="1"/>
</dbReference>
<dbReference type="SUPFAM" id="SSF56762">
    <property type="entry name" value="HydB/Nqo4-like"/>
    <property type="match status" value="1"/>
</dbReference>
<dbReference type="SUPFAM" id="SSF143243">
    <property type="entry name" value="Nqo5-like"/>
    <property type="match status" value="1"/>
</dbReference>
<dbReference type="PROSITE" id="PS00542">
    <property type="entry name" value="COMPLEX1_30K"/>
    <property type="match status" value="1"/>
</dbReference>
<dbReference type="PROSITE" id="PS00535">
    <property type="entry name" value="COMPLEX1_49K"/>
    <property type="match status" value="1"/>
</dbReference>
<name>NUOCD_ECO5E</name>
<feature type="chain" id="PRO_1000143685" description="NADH-quinone oxidoreductase subunit C/D">
    <location>
        <begin position="1"/>
        <end position="600"/>
    </location>
</feature>
<feature type="region of interest" description="NADH dehydrogenase I subunit C" evidence="1">
    <location>
        <begin position="1"/>
        <end position="190"/>
    </location>
</feature>
<feature type="region of interest" description="NADH dehydrogenase I subunit D" evidence="1">
    <location>
        <begin position="214"/>
        <end position="600"/>
    </location>
</feature>
<gene>
    <name evidence="1" type="primary">nuoC</name>
    <name evidence="1" type="synonym">nuoCD</name>
    <name evidence="1" type="synonym">nuoD</name>
    <name type="ordered locus">ECH74115_3425</name>
</gene>
<reference key="1">
    <citation type="journal article" date="2011" name="Proc. Natl. Acad. Sci. U.S.A.">
        <title>Genomic anatomy of Escherichia coli O157:H7 outbreaks.</title>
        <authorList>
            <person name="Eppinger M."/>
            <person name="Mammel M.K."/>
            <person name="Leclerc J.E."/>
            <person name="Ravel J."/>
            <person name="Cebula T.A."/>
        </authorList>
    </citation>
    <scope>NUCLEOTIDE SEQUENCE [LARGE SCALE GENOMIC DNA]</scope>
    <source>
        <strain>EC4115 / EHEC</strain>
    </source>
</reference>
<keyword id="KW-0997">Cell inner membrane</keyword>
<keyword id="KW-1003">Cell membrane</keyword>
<keyword id="KW-0472">Membrane</keyword>
<keyword id="KW-0511">Multifunctional enzyme</keyword>
<keyword id="KW-0520">NAD</keyword>
<keyword id="KW-0874">Quinone</keyword>
<keyword id="KW-1278">Translocase</keyword>
<keyword id="KW-0813">Transport</keyword>
<keyword id="KW-0830">Ubiquinone</keyword>
<accession>B5YXS6</accession>
<evidence type="ECO:0000255" key="1">
    <source>
        <dbReference type="HAMAP-Rule" id="MF_01359"/>
    </source>
</evidence>
<organism>
    <name type="scientific">Escherichia coli O157:H7 (strain EC4115 / EHEC)</name>
    <dbReference type="NCBI Taxonomy" id="444450"/>
    <lineage>
        <taxon>Bacteria</taxon>
        <taxon>Pseudomonadati</taxon>
        <taxon>Pseudomonadota</taxon>
        <taxon>Gammaproteobacteria</taxon>
        <taxon>Enterobacterales</taxon>
        <taxon>Enterobacteriaceae</taxon>
        <taxon>Escherichia</taxon>
    </lineage>
</organism>
<proteinExistence type="inferred from homology"/>
<protein>
    <recommendedName>
        <fullName evidence="1">NADH-quinone oxidoreductase subunit C/D</fullName>
        <ecNumber evidence="1">7.1.1.-</ecNumber>
    </recommendedName>
    <alternativeName>
        <fullName evidence="1">NADH dehydrogenase I subunit C/D</fullName>
    </alternativeName>
    <alternativeName>
        <fullName evidence="1">NDH-1 subunit C/D</fullName>
    </alternativeName>
</protein>
<comment type="function">
    <text evidence="1">NDH-1 shuttles electrons from NADH, via FMN and iron-sulfur (Fe-S) centers, to quinones in the respiratory chain. The immediate electron acceptor for the enzyme in this species is believed to be ubiquinone. Couples the redox reaction to proton translocation (for every two electrons transferred, four hydrogen ions are translocated across the cytoplasmic membrane), and thus conserves the redox energy in a proton gradient.</text>
</comment>
<comment type="catalytic activity">
    <reaction evidence="1">
        <text>a quinone + NADH + 5 H(+)(in) = a quinol + NAD(+) + 4 H(+)(out)</text>
        <dbReference type="Rhea" id="RHEA:57888"/>
        <dbReference type="ChEBI" id="CHEBI:15378"/>
        <dbReference type="ChEBI" id="CHEBI:24646"/>
        <dbReference type="ChEBI" id="CHEBI:57540"/>
        <dbReference type="ChEBI" id="CHEBI:57945"/>
        <dbReference type="ChEBI" id="CHEBI:132124"/>
    </reaction>
</comment>
<comment type="subunit">
    <text evidence="1">NDH-1 is composed of 13 different subunits. Subunits NuoB, CD, E, F, and G constitute the peripheral sector of the complex.</text>
</comment>
<comment type="subcellular location">
    <subcellularLocation>
        <location evidence="1">Cell inner membrane</location>
        <topology evidence="1">Peripheral membrane protein</topology>
        <orientation evidence="1">Cytoplasmic side</orientation>
    </subcellularLocation>
</comment>
<comment type="similarity">
    <text evidence="1">In the N-terminal section; belongs to the complex I 30 kDa subunit family.</text>
</comment>
<comment type="similarity">
    <text evidence="1">In the C-terminal section; belongs to the complex I 49 kDa subunit family.</text>
</comment>